<dbReference type="EC" id="5.3.1.17" evidence="1"/>
<dbReference type="EMBL" id="CP000802">
    <property type="protein sequence ID" value="ABV07231.1"/>
    <property type="molecule type" value="Genomic_DNA"/>
</dbReference>
<dbReference type="RefSeq" id="WP_000383237.1">
    <property type="nucleotide sequence ID" value="NC_009800.1"/>
</dbReference>
<dbReference type="SMR" id="A8A3X7"/>
<dbReference type="GeneID" id="75203765"/>
<dbReference type="KEGG" id="ecx:EcHS_A2990"/>
<dbReference type="HOGENOM" id="CLU_062609_0_0_6"/>
<dbReference type="UniPathway" id="UPA00545">
    <property type="reaction ID" value="UER00826"/>
</dbReference>
<dbReference type="GO" id="GO:0008697">
    <property type="term" value="F:4-deoxy-L-threo-5-hexosulose-uronate ketol-isomerase activity"/>
    <property type="evidence" value="ECO:0007669"/>
    <property type="project" value="UniProtKB-UniRule"/>
</dbReference>
<dbReference type="GO" id="GO:0008270">
    <property type="term" value="F:zinc ion binding"/>
    <property type="evidence" value="ECO:0007669"/>
    <property type="project" value="UniProtKB-UniRule"/>
</dbReference>
<dbReference type="GO" id="GO:0019698">
    <property type="term" value="P:D-galacturonate catabolic process"/>
    <property type="evidence" value="ECO:0007669"/>
    <property type="project" value="TreeGrafter"/>
</dbReference>
<dbReference type="GO" id="GO:0042840">
    <property type="term" value="P:D-glucuronate catabolic process"/>
    <property type="evidence" value="ECO:0007669"/>
    <property type="project" value="TreeGrafter"/>
</dbReference>
<dbReference type="GO" id="GO:0045490">
    <property type="term" value="P:pectin catabolic process"/>
    <property type="evidence" value="ECO:0007669"/>
    <property type="project" value="UniProtKB-UniRule"/>
</dbReference>
<dbReference type="CDD" id="cd20491">
    <property type="entry name" value="cupin_KduI_C"/>
    <property type="match status" value="1"/>
</dbReference>
<dbReference type="CDD" id="cd20294">
    <property type="entry name" value="cupin_KduI_N"/>
    <property type="match status" value="1"/>
</dbReference>
<dbReference type="FunFam" id="2.60.120.10:FF:000018">
    <property type="entry name" value="4-deoxy-L-threo-5-hexosulose-uronate ketol-isomerase"/>
    <property type="match status" value="1"/>
</dbReference>
<dbReference type="FunFam" id="2.60.120.520:FF:000001">
    <property type="entry name" value="4-deoxy-L-threo-5-hexosulose-uronate ketol-isomerase"/>
    <property type="match status" value="1"/>
</dbReference>
<dbReference type="Gene3D" id="2.60.120.10">
    <property type="entry name" value="Jelly Rolls"/>
    <property type="match status" value="1"/>
</dbReference>
<dbReference type="Gene3D" id="2.60.120.520">
    <property type="entry name" value="pectin degrading enzyme 5-keto 4- deoxyuronate isomerase, domain 1"/>
    <property type="match status" value="1"/>
</dbReference>
<dbReference type="HAMAP" id="MF_00687">
    <property type="entry name" value="KduI"/>
    <property type="match status" value="1"/>
</dbReference>
<dbReference type="InterPro" id="IPR007045">
    <property type="entry name" value="KduI"/>
</dbReference>
<dbReference type="InterPro" id="IPR021120">
    <property type="entry name" value="KduI/IolB_isomerase"/>
</dbReference>
<dbReference type="InterPro" id="IPR027449">
    <property type="entry name" value="KduI_N"/>
</dbReference>
<dbReference type="InterPro" id="IPR014710">
    <property type="entry name" value="RmlC-like_jellyroll"/>
</dbReference>
<dbReference type="InterPro" id="IPR011051">
    <property type="entry name" value="RmlC_Cupin_sf"/>
</dbReference>
<dbReference type="NCBIfam" id="NF002091">
    <property type="entry name" value="PRK00924.1"/>
    <property type="match status" value="1"/>
</dbReference>
<dbReference type="PANTHER" id="PTHR38461">
    <property type="entry name" value="4-DEOXY-L-THREO-5-HEXOSULOSE-URONATE KETOL-ISOMERASE"/>
    <property type="match status" value="1"/>
</dbReference>
<dbReference type="PANTHER" id="PTHR38461:SF1">
    <property type="entry name" value="4-DEOXY-L-THREO-5-HEXOSULOSE-URONATE KETOL-ISOMERASE"/>
    <property type="match status" value="1"/>
</dbReference>
<dbReference type="Pfam" id="PF04962">
    <property type="entry name" value="KduI"/>
    <property type="match status" value="1"/>
</dbReference>
<dbReference type="PIRSF" id="PIRSF006625">
    <property type="entry name" value="KduI"/>
    <property type="match status" value="1"/>
</dbReference>
<dbReference type="SUPFAM" id="SSF51182">
    <property type="entry name" value="RmlC-like cupins"/>
    <property type="match status" value="1"/>
</dbReference>
<reference key="1">
    <citation type="journal article" date="2008" name="J. Bacteriol.">
        <title>The pangenome structure of Escherichia coli: comparative genomic analysis of E. coli commensal and pathogenic isolates.</title>
        <authorList>
            <person name="Rasko D.A."/>
            <person name="Rosovitz M.J."/>
            <person name="Myers G.S.A."/>
            <person name="Mongodin E.F."/>
            <person name="Fricke W.F."/>
            <person name="Gajer P."/>
            <person name="Crabtree J."/>
            <person name="Sebaihia M."/>
            <person name="Thomson N.R."/>
            <person name="Chaudhuri R."/>
            <person name="Henderson I.R."/>
            <person name="Sperandio V."/>
            <person name="Ravel J."/>
        </authorList>
    </citation>
    <scope>NUCLEOTIDE SEQUENCE [LARGE SCALE GENOMIC DNA]</scope>
    <source>
        <strain>HS</strain>
    </source>
</reference>
<organism>
    <name type="scientific">Escherichia coli O9:H4 (strain HS)</name>
    <dbReference type="NCBI Taxonomy" id="331112"/>
    <lineage>
        <taxon>Bacteria</taxon>
        <taxon>Pseudomonadati</taxon>
        <taxon>Pseudomonadota</taxon>
        <taxon>Gammaproteobacteria</taxon>
        <taxon>Enterobacterales</taxon>
        <taxon>Enterobacteriaceae</taxon>
        <taxon>Escherichia</taxon>
    </lineage>
</organism>
<gene>
    <name evidence="1" type="primary">kduI</name>
    <name type="ordered locus">EcHS_A2990</name>
</gene>
<sequence length="278" mass="31076">MDVRQSIHSAHAKTLDTQGLRNEFLVEKVFVADEYTMVYSHIDRIIVGGIMPITKTVSVGGEVGKQLGVSYFLERRELGVINIGGAGTITVDGQCYEIGHRDALYVGKGAKEVVFASIDTGTPAKFYYNCAPAHTTYPTKKVTPDEVSPVTLGDNLTSNRRTINKYFVPDVLETCQLSMGLTELAPGNLWNTMPCHTHERRMEVYFYFNMDDDACVFHMMGQPQETRHIVMHNEQAVISPSWSIHSGVGTKAYTFIWGMVGENQVFDDMDHVAVKDLR</sequence>
<protein>
    <recommendedName>
        <fullName evidence="1">4-deoxy-L-threo-5-hexosulose-uronate ketol-isomerase</fullName>
        <ecNumber evidence="1">5.3.1.17</ecNumber>
    </recommendedName>
    <alternativeName>
        <fullName evidence="1">5-keto-4-deoxyuronate isomerase</fullName>
    </alternativeName>
    <alternativeName>
        <fullName evidence="1">DKI isomerase</fullName>
    </alternativeName>
</protein>
<proteinExistence type="inferred from homology"/>
<name>KDUI_ECOHS</name>
<comment type="function">
    <text evidence="1">Catalyzes the isomerization of 5-dehydro-4-deoxy-D-glucuronate to 3-deoxy-D-glycero-2,5-hexodiulosonate.</text>
</comment>
<comment type="catalytic activity">
    <reaction evidence="1">
        <text>5-dehydro-4-deoxy-D-glucuronate = 3-deoxy-D-glycero-2,5-hexodiulosonate</text>
        <dbReference type="Rhea" id="RHEA:23896"/>
        <dbReference type="ChEBI" id="CHEBI:17117"/>
        <dbReference type="ChEBI" id="CHEBI:29071"/>
        <dbReference type="EC" id="5.3.1.17"/>
    </reaction>
</comment>
<comment type="cofactor">
    <cofactor evidence="1">
        <name>Zn(2+)</name>
        <dbReference type="ChEBI" id="CHEBI:29105"/>
    </cofactor>
    <text evidence="1">Binds 1 zinc ion per subunit.</text>
</comment>
<comment type="pathway">
    <text evidence="1">Glycan metabolism; pectin degradation; 2-dehydro-3-deoxy-D-gluconate from pectin: step 4/5.</text>
</comment>
<comment type="subunit">
    <text evidence="1">Homohexamer.</text>
</comment>
<comment type="similarity">
    <text evidence="1">Belongs to the KduI family.</text>
</comment>
<keyword id="KW-0413">Isomerase</keyword>
<keyword id="KW-0479">Metal-binding</keyword>
<keyword id="KW-0862">Zinc</keyword>
<feature type="chain" id="PRO_1000062001" description="4-deoxy-L-threo-5-hexosulose-uronate ketol-isomerase">
    <location>
        <begin position="1"/>
        <end position="278"/>
    </location>
</feature>
<feature type="binding site" evidence="1">
    <location>
        <position position="196"/>
    </location>
    <ligand>
        <name>Zn(2+)</name>
        <dbReference type="ChEBI" id="CHEBI:29105"/>
    </ligand>
</feature>
<feature type="binding site" evidence="1">
    <location>
        <position position="198"/>
    </location>
    <ligand>
        <name>Zn(2+)</name>
        <dbReference type="ChEBI" id="CHEBI:29105"/>
    </ligand>
</feature>
<feature type="binding site" evidence="1">
    <location>
        <position position="203"/>
    </location>
    <ligand>
        <name>Zn(2+)</name>
        <dbReference type="ChEBI" id="CHEBI:29105"/>
    </ligand>
</feature>
<feature type="binding site" evidence="1">
    <location>
        <position position="245"/>
    </location>
    <ligand>
        <name>Zn(2+)</name>
        <dbReference type="ChEBI" id="CHEBI:29105"/>
    </ligand>
</feature>
<accession>A8A3X7</accession>
<evidence type="ECO:0000255" key="1">
    <source>
        <dbReference type="HAMAP-Rule" id="MF_00687"/>
    </source>
</evidence>